<name>TRPA_FRAT1</name>
<organism>
    <name type="scientific">Francisella tularensis subsp. tularensis (strain FSC 198)</name>
    <dbReference type="NCBI Taxonomy" id="393115"/>
    <lineage>
        <taxon>Bacteria</taxon>
        <taxon>Pseudomonadati</taxon>
        <taxon>Pseudomonadota</taxon>
        <taxon>Gammaproteobacteria</taxon>
        <taxon>Thiotrichales</taxon>
        <taxon>Francisellaceae</taxon>
        <taxon>Francisella</taxon>
    </lineage>
</organism>
<protein>
    <recommendedName>
        <fullName evidence="1">Tryptophan synthase alpha chain</fullName>
        <ecNumber evidence="1">4.2.1.20</ecNumber>
    </recommendedName>
</protein>
<reference key="1">
    <citation type="journal article" date="2007" name="PLoS ONE">
        <title>Genome sequencing shows that European isolates of Francisella tularensis subspecies tularensis are almost identical to US laboratory strain Schu S4.</title>
        <authorList>
            <person name="Chaudhuri R.R."/>
            <person name="Ren C.-P."/>
            <person name="Desmond L."/>
            <person name="Vincent G.A."/>
            <person name="Silman N.J."/>
            <person name="Brehm J.K."/>
            <person name="Elmore M.J."/>
            <person name="Hudson M.J."/>
            <person name="Forsman M."/>
            <person name="Isherwood K.E."/>
            <person name="Gurycova D."/>
            <person name="Minton N.P."/>
            <person name="Titball R.W."/>
            <person name="Pallen M.J."/>
            <person name="Vipond R."/>
        </authorList>
    </citation>
    <scope>NUCLEOTIDE SEQUENCE [LARGE SCALE GENOMIC DNA]</scope>
    <source>
        <strain>FSC 198</strain>
    </source>
</reference>
<comment type="function">
    <text evidence="1">The alpha subunit is responsible for the aldol cleavage of indoleglycerol phosphate to indole and glyceraldehyde 3-phosphate.</text>
</comment>
<comment type="catalytic activity">
    <reaction evidence="1">
        <text>(1S,2R)-1-C-(indol-3-yl)glycerol 3-phosphate + L-serine = D-glyceraldehyde 3-phosphate + L-tryptophan + H2O</text>
        <dbReference type="Rhea" id="RHEA:10532"/>
        <dbReference type="ChEBI" id="CHEBI:15377"/>
        <dbReference type="ChEBI" id="CHEBI:33384"/>
        <dbReference type="ChEBI" id="CHEBI:57912"/>
        <dbReference type="ChEBI" id="CHEBI:58866"/>
        <dbReference type="ChEBI" id="CHEBI:59776"/>
        <dbReference type="EC" id="4.2.1.20"/>
    </reaction>
</comment>
<comment type="pathway">
    <text evidence="1">Amino-acid biosynthesis; L-tryptophan biosynthesis; L-tryptophan from chorismate: step 5/5.</text>
</comment>
<comment type="subunit">
    <text evidence="1">Tetramer of two alpha and two beta chains.</text>
</comment>
<comment type="similarity">
    <text evidence="1">Belongs to the TrpA family.</text>
</comment>
<feature type="chain" id="PRO_1000018202" description="Tryptophan synthase alpha chain">
    <location>
        <begin position="1"/>
        <end position="269"/>
    </location>
</feature>
<feature type="active site" description="Proton acceptor" evidence="1">
    <location>
        <position position="50"/>
    </location>
</feature>
<feature type="active site" description="Proton acceptor" evidence="1">
    <location>
        <position position="61"/>
    </location>
</feature>
<dbReference type="EC" id="4.2.1.20" evidence="1"/>
<dbReference type="EMBL" id="AM286280">
    <property type="protein sequence ID" value="CAL09788.1"/>
    <property type="molecule type" value="Genomic_DNA"/>
</dbReference>
<dbReference type="RefSeq" id="WP_003022758.1">
    <property type="nucleotide sequence ID" value="NC_008245.1"/>
</dbReference>
<dbReference type="SMR" id="Q14FN3"/>
<dbReference type="KEGG" id="ftf:FTF1772c"/>
<dbReference type="HOGENOM" id="CLU_016734_0_4_6"/>
<dbReference type="UniPathway" id="UPA00035">
    <property type="reaction ID" value="UER00044"/>
</dbReference>
<dbReference type="GO" id="GO:0005829">
    <property type="term" value="C:cytosol"/>
    <property type="evidence" value="ECO:0007669"/>
    <property type="project" value="TreeGrafter"/>
</dbReference>
<dbReference type="GO" id="GO:0004834">
    <property type="term" value="F:tryptophan synthase activity"/>
    <property type="evidence" value="ECO:0007669"/>
    <property type="project" value="UniProtKB-UniRule"/>
</dbReference>
<dbReference type="CDD" id="cd04724">
    <property type="entry name" value="Tryptophan_synthase_alpha"/>
    <property type="match status" value="1"/>
</dbReference>
<dbReference type="FunFam" id="3.20.20.70:FF:000037">
    <property type="entry name" value="Tryptophan synthase alpha chain"/>
    <property type="match status" value="1"/>
</dbReference>
<dbReference type="Gene3D" id="3.20.20.70">
    <property type="entry name" value="Aldolase class I"/>
    <property type="match status" value="1"/>
</dbReference>
<dbReference type="HAMAP" id="MF_00131">
    <property type="entry name" value="Trp_synth_alpha"/>
    <property type="match status" value="1"/>
</dbReference>
<dbReference type="InterPro" id="IPR013785">
    <property type="entry name" value="Aldolase_TIM"/>
</dbReference>
<dbReference type="InterPro" id="IPR011060">
    <property type="entry name" value="RibuloseP-bd_barrel"/>
</dbReference>
<dbReference type="InterPro" id="IPR018204">
    <property type="entry name" value="Trp_synthase_alpha_AS"/>
</dbReference>
<dbReference type="InterPro" id="IPR002028">
    <property type="entry name" value="Trp_synthase_suA"/>
</dbReference>
<dbReference type="NCBIfam" id="TIGR00262">
    <property type="entry name" value="trpA"/>
    <property type="match status" value="1"/>
</dbReference>
<dbReference type="PANTHER" id="PTHR43406:SF1">
    <property type="entry name" value="TRYPTOPHAN SYNTHASE ALPHA CHAIN, CHLOROPLASTIC"/>
    <property type="match status" value="1"/>
</dbReference>
<dbReference type="PANTHER" id="PTHR43406">
    <property type="entry name" value="TRYPTOPHAN SYNTHASE, ALPHA CHAIN"/>
    <property type="match status" value="1"/>
</dbReference>
<dbReference type="Pfam" id="PF00290">
    <property type="entry name" value="Trp_syntA"/>
    <property type="match status" value="1"/>
</dbReference>
<dbReference type="SUPFAM" id="SSF51366">
    <property type="entry name" value="Ribulose-phoshate binding barrel"/>
    <property type="match status" value="1"/>
</dbReference>
<dbReference type="PROSITE" id="PS00167">
    <property type="entry name" value="TRP_SYNTHASE_ALPHA"/>
    <property type="match status" value="1"/>
</dbReference>
<keyword id="KW-0028">Amino-acid biosynthesis</keyword>
<keyword id="KW-0057">Aromatic amino acid biosynthesis</keyword>
<keyword id="KW-0456">Lyase</keyword>
<keyword id="KW-0822">Tryptophan biosynthesis</keyword>
<gene>
    <name evidence="1" type="primary">trpA</name>
    <name type="ordered locus">FTF1772c</name>
</gene>
<evidence type="ECO:0000255" key="1">
    <source>
        <dbReference type="HAMAP-Rule" id="MF_00131"/>
    </source>
</evidence>
<sequence length="269" mass="29068">MTNRYTTLFANLEKRNEGAFIPFVTIGDPNKALSFEIIDTLVSSGADALELGIPFSDPLADGPTIQEANIRALESGITPKDCFDILTKIRAKYPHIPIGLLLYANLVYANGIENFYQKCLDAGVDSILIADVPAHESKEFRDIAKKVGIAQIFIAPPDASESTLKQISELGSGYTYLLSRVGVTGTETAANMPVEDVLTKLREYNAPKPVLGFGISKPEQVQQAIKAGAAGAISGSATVKIIQNNISNKQKMLNELTYFVKEMKAATLN</sequence>
<proteinExistence type="inferred from homology"/>
<accession>Q14FN3</accession>